<sequence length="205" mass="21849">MNCRVKICGITNLDDAMVACRYGADALGFVFYEKSPRYVAPDMANAIVAQLPPFIIPVALFVDADTSLVNSVISGSSRWTIQFHGSESESECISYQRPYIKALRIQRGDDVAALVDQYPSASAMLLDAYKAGVPGGTGEVFDWSLIPIGLSKPIVLAGGLTPSNVKQAIKQVKPYAVDVSGGVELSKGIKSEPLVQEFISGAKCG</sequence>
<feature type="chain" id="PRO_1000197110" description="N-(5'-phosphoribosyl)anthranilate isomerase">
    <location>
        <begin position="1"/>
        <end position="205"/>
    </location>
</feature>
<evidence type="ECO:0000255" key="1">
    <source>
        <dbReference type="HAMAP-Rule" id="MF_00135"/>
    </source>
</evidence>
<protein>
    <recommendedName>
        <fullName evidence="1">N-(5'-phosphoribosyl)anthranilate isomerase</fullName>
        <shortName evidence="1">PRAI</shortName>
        <ecNumber evidence="1">5.3.1.24</ecNumber>
    </recommendedName>
</protein>
<organism>
    <name type="scientific">Marinomonas sp. (strain MWYL1)</name>
    <dbReference type="NCBI Taxonomy" id="400668"/>
    <lineage>
        <taxon>Bacteria</taxon>
        <taxon>Pseudomonadati</taxon>
        <taxon>Pseudomonadota</taxon>
        <taxon>Gammaproteobacteria</taxon>
        <taxon>Oceanospirillales</taxon>
        <taxon>Oceanospirillaceae</taxon>
        <taxon>Marinomonas</taxon>
    </lineage>
</organism>
<keyword id="KW-0028">Amino-acid biosynthesis</keyword>
<keyword id="KW-0057">Aromatic amino acid biosynthesis</keyword>
<keyword id="KW-0413">Isomerase</keyword>
<keyword id="KW-0822">Tryptophan biosynthesis</keyword>
<accession>A6VWY4</accession>
<gene>
    <name evidence="1" type="primary">trpF</name>
    <name type="ordered locus">Mmwyl1_2041</name>
</gene>
<proteinExistence type="inferred from homology"/>
<reference key="1">
    <citation type="submission" date="2007-06" db="EMBL/GenBank/DDBJ databases">
        <title>Complete sequence of Marinomonas sp. MWYL1.</title>
        <authorList>
            <consortium name="US DOE Joint Genome Institute"/>
            <person name="Copeland A."/>
            <person name="Lucas S."/>
            <person name="Lapidus A."/>
            <person name="Barry K."/>
            <person name="Glavina del Rio T."/>
            <person name="Dalin E."/>
            <person name="Tice H."/>
            <person name="Pitluck S."/>
            <person name="Kiss H."/>
            <person name="Brettin T."/>
            <person name="Bruce D."/>
            <person name="Detter J.C."/>
            <person name="Han C."/>
            <person name="Schmutz J."/>
            <person name="Larimer F."/>
            <person name="Land M."/>
            <person name="Hauser L."/>
            <person name="Kyrpides N."/>
            <person name="Kim E."/>
            <person name="Johnston A.W.B."/>
            <person name="Todd J.D."/>
            <person name="Rogers R."/>
            <person name="Wexler M."/>
            <person name="Bond P.L."/>
            <person name="Li Y."/>
            <person name="Richardson P."/>
        </authorList>
    </citation>
    <scope>NUCLEOTIDE SEQUENCE [LARGE SCALE GENOMIC DNA]</scope>
    <source>
        <strain>MWYL1</strain>
    </source>
</reference>
<comment type="catalytic activity">
    <reaction evidence="1">
        <text>N-(5-phospho-beta-D-ribosyl)anthranilate = 1-(2-carboxyphenylamino)-1-deoxy-D-ribulose 5-phosphate</text>
        <dbReference type="Rhea" id="RHEA:21540"/>
        <dbReference type="ChEBI" id="CHEBI:18277"/>
        <dbReference type="ChEBI" id="CHEBI:58613"/>
        <dbReference type="EC" id="5.3.1.24"/>
    </reaction>
</comment>
<comment type="pathway">
    <text evidence="1">Amino-acid biosynthesis; L-tryptophan biosynthesis; L-tryptophan from chorismate: step 3/5.</text>
</comment>
<comment type="similarity">
    <text evidence="1">Belongs to the TrpF family.</text>
</comment>
<name>TRPF_MARMS</name>
<dbReference type="EC" id="5.3.1.24" evidence="1"/>
<dbReference type="EMBL" id="CP000749">
    <property type="protein sequence ID" value="ABR70963.1"/>
    <property type="molecule type" value="Genomic_DNA"/>
</dbReference>
<dbReference type="SMR" id="A6VWY4"/>
<dbReference type="STRING" id="400668.Mmwyl1_2041"/>
<dbReference type="KEGG" id="mmw:Mmwyl1_2041"/>
<dbReference type="eggNOG" id="COG0135">
    <property type="taxonomic scope" value="Bacteria"/>
</dbReference>
<dbReference type="HOGENOM" id="CLU_076364_2_0_6"/>
<dbReference type="OrthoDB" id="9796196at2"/>
<dbReference type="UniPathway" id="UPA00035">
    <property type="reaction ID" value="UER00042"/>
</dbReference>
<dbReference type="GO" id="GO:0004640">
    <property type="term" value="F:phosphoribosylanthranilate isomerase activity"/>
    <property type="evidence" value="ECO:0007669"/>
    <property type="project" value="UniProtKB-UniRule"/>
</dbReference>
<dbReference type="GO" id="GO:0000162">
    <property type="term" value="P:L-tryptophan biosynthetic process"/>
    <property type="evidence" value="ECO:0007669"/>
    <property type="project" value="UniProtKB-UniRule"/>
</dbReference>
<dbReference type="CDD" id="cd00405">
    <property type="entry name" value="PRAI"/>
    <property type="match status" value="1"/>
</dbReference>
<dbReference type="FunFam" id="3.20.20.70:FF:000075">
    <property type="entry name" value="Tryptophan biosynthesis protein TRP1"/>
    <property type="match status" value="1"/>
</dbReference>
<dbReference type="Gene3D" id="3.20.20.70">
    <property type="entry name" value="Aldolase class I"/>
    <property type="match status" value="1"/>
</dbReference>
<dbReference type="HAMAP" id="MF_00135">
    <property type="entry name" value="PRAI"/>
    <property type="match status" value="1"/>
</dbReference>
<dbReference type="InterPro" id="IPR013785">
    <property type="entry name" value="Aldolase_TIM"/>
</dbReference>
<dbReference type="InterPro" id="IPR001240">
    <property type="entry name" value="PRAI_dom"/>
</dbReference>
<dbReference type="InterPro" id="IPR011060">
    <property type="entry name" value="RibuloseP-bd_barrel"/>
</dbReference>
<dbReference type="InterPro" id="IPR044643">
    <property type="entry name" value="TrpF_fam"/>
</dbReference>
<dbReference type="NCBIfam" id="NF002298">
    <property type="entry name" value="PRK01222.1-4"/>
    <property type="match status" value="1"/>
</dbReference>
<dbReference type="PANTHER" id="PTHR42894">
    <property type="entry name" value="N-(5'-PHOSPHORIBOSYL)ANTHRANILATE ISOMERASE"/>
    <property type="match status" value="1"/>
</dbReference>
<dbReference type="PANTHER" id="PTHR42894:SF1">
    <property type="entry name" value="N-(5'-PHOSPHORIBOSYL)ANTHRANILATE ISOMERASE"/>
    <property type="match status" value="1"/>
</dbReference>
<dbReference type="Pfam" id="PF00697">
    <property type="entry name" value="PRAI"/>
    <property type="match status" value="1"/>
</dbReference>
<dbReference type="SUPFAM" id="SSF51366">
    <property type="entry name" value="Ribulose-phoshate binding barrel"/>
    <property type="match status" value="1"/>
</dbReference>